<sequence>MTPEELSAAISACLKDAVSTGEIALTESAVPDAVRVERPKNRDHGDWATNIALQLSKQAGMNPREFAGILSNHLQGIPGVTGVEIAGPGFLNITVDAATAGALAKAIVEAGASYGTNQALAGRVVNMEFVSANPTGPLHIGHTRWAALGDAIARVLRASGADVTAEYYINDAGSQMNVFANSVLSRLHGRGVPEGGYPGEYIRELGDEVLKAHPGIRELTDEAALPVIRAAAYEAQMSDIKTTLAEFGVEFDVFFSEKELHDAGAIESAVARLREQGHVFDDGGAVWLRTTDFGDDKDRVMIRANGEPTYFAADAAYYLSKKDRGFTEKIYLLGADHHGYINRLKAIAACAGDDPEVNIEVLIGQLVSVNGAKLSKRAGNIIELKDLISWLGKDAVRYSLARFPADSPLTLDPELLKKHSNENPVFYVQYAHARSRGTARNAAEAGVDRSVFDASLLDHATENELLSYLGSYPSIVAKAAELREPHRVARHLEVIAGAYHRWYDACRVSPQGEEPVLDVNRTRLWLNDATSQVLANGLELLGVSAPERM</sequence>
<protein>
    <recommendedName>
        <fullName evidence="1">Arginine--tRNA ligase</fullName>
        <ecNumber evidence="1">6.1.1.19</ecNumber>
    </recommendedName>
    <alternativeName>
        <fullName evidence="1">Arginyl-tRNA synthetase</fullName>
        <shortName evidence="1">ArgRS</shortName>
    </alternativeName>
</protein>
<evidence type="ECO:0000255" key="1">
    <source>
        <dbReference type="HAMAP-Rule" id="MF_00123"/>
    </source>
</evidence>
<keyword id="KW-0030">Aminoacyl-tRNA synthetase</keyword>
<keyword id="KW-0067">ATP-binding</keyword>
<keyword id="KW-0963">Cytoplasm</keyword>
<keyword id="KW-0436">Ligase</keyword>
<keyword id="KW-0547">Nucleotide-binding</keyword>
<keyword id="KW-0648">Protein biosynthesis</keyword>
<gene>
    <name evidence="1" type="primary">argS</name>
    <name type="ordered locus">AAur_2614</name>
</gene>
<reference key="1">
    <citation type="journal article" date="2006" name="PLoS Genet.">
        <title>Secrets of soil survival revealed by the genome sequence of Arthrobacter aurescens TC1.</title>
        <authorList>
            <person name="Mongodin E.F."/>
            <person name="Shapir N."/>
            <person name="Daugherty S.C."/>
            <person name="DeBoy R.T."/>
            <person name="Emerson J.B."/>
            <person name="Shvartzbeyn A."/>
            <person name="Radune D."/>
            <person name="Vamathevan J."/>
            <person name="Riggs F."/>
            <person name="Grinberg V."/>
            <person name="Khouri H.M."/>
            <person name="Wackett L.P."/>
            <person name="Nelson K.E."/>
            <person name="Sadowsky M.J."/>
        </authorList>
    </citation>
    <scope>NUCLEOTIDE SEQUENCE [LARGE SCALE GENOMIC DNA]</scope>
    <source>
        <strain>TC1</strain>
    </source>
</reference>
<comment type="catalytic activity">
    <reaction evidence="1">
        <text>tRNA(Arg) + L-arginine + ATP = L-arginyl-tRNA(Arg) + AMP + diphosphate</text>
        <dbReference type="Rhea" id="RHEA:20301"/>
        <dbReference type="Rhea" id="RHEA-COMP:9658"/>
        <dbReference type="Rhea" id="RHEA-COMP:9673"/>
        <dbReference type="ChEBI" id="CHEBI:30616"/>
        <dbReference type="ChEBI" id="CHEBI:32682"/>
        <dbReference type="ChEBI" id="CHEBI:33019"/>
        <dbReference type="ChEBI" id="CHEBI:78442"/>
        <dbReference type="ChEBI" id="CHEBI:78513"/>
        <dbReference type="ChEBI" id="CHEBI:456215"/>
        <dbReference type="EC" id="6.1.1.19"/>
    </reaction>
</comment>
<comment type="subunit">
    <text evidence="1">Monomer.</text>
</comment>
<comment type="subcellular location">
    <subcellularLocation>
        <location evidence="1">Cytoplasm</location>
    </subcellularLocation>
</comment>
<comment type="similarity">
    <text evidence="1">Belongs to the class-I aminoacyl-tRNA synthetase family.</text>
</comment>
<feature type="chain" id="PRO_1000017985" description="Arginine--tRNA ligase">
    <location>
        <begin position="1"/>
        <end position="549"/>
    </location>
</feature>
<feature type="short sequence motif" description="'HIGH' region">
    <location>
        <begin position="132"/>
        <end position="142"/>
    </location>
</feature>
<dbReference type="EC" id="6.1.1.19" evidence="1"/>
<dbReference type="EMBL" id="CP000474">
    <property type="protein sequence ID" value="ABM06929.1"/>
    <property type="molecule type" value="Genomic_DNA"/>
</dbReference>
<dbReference type="RefSeq" id="WP_011775276.1">
    <property type="nucleotide sequence ID" value="NC_008711.1"/>
</dbReference>
<dbReference type="SMR" id="A1R7X2"/>
<dbReference type="STRING" id="290340.AAur_2614"/>
<dbReference type="KEGG" id="aau:AAur_2614"/>
<dbReference type="eggNOG" id="COG0018">
    <property type="taxonomic scope" value="Bacteria"/>
</dbReference>
<dbReference type="HOGENOM" id="CLU_006406_0_1_11"/>
<dbReference type="OrthoDB" id="9803211at2"/>
<dbReference type="Proteomes" id="UP000000637">
    <property type="component" value="Chromosome"/>
</dbReference>
<dbReference type="GO" id="GO:0005737">
    <property type="term" value="C:cytoplasm"/>
    <property type="evidence" value="ECO:0007669"/>
    <property type="project" value="UniProtKB-SubCell"/>
</dbReference>
<dbReference type="GO" id="GO:0004814">
    <property type="term" value="F:arginine-tRNA ligase activity"/>
    <property type="evidence" value="ECO:0007669"/>
    <property type="project" value="UniProtKB-UniRule"/>
</dbReference>
<dbReference type="GO" id="GO:0005524">
    <property type="term" value="F:ATP binding"/>
    <property type="evidence" value="ECO:0007669"/>
    <property type="project" value="UniProtKB-UniRule"/>
</dbReference>
<dbReference type="GO" id="GO:0006420">
    <property type="term" value="P:arginyl-tRNA aminoacylation"/>
    <property type="evidence" value="ECO:0007669"/>
    <property type="project" value="UniProtKB-UniRule"/>
</dbReference>
<dbReference type="CDD" id="cd00671">
    <property type="entry name" value="ArgRS_core"/>
    <property type="match status" value="1"/>
</dbReference>
<dbReference type="FunFam" id="1.10.730.10:FF:000008">
    <property type="entry name" value="Arginine--tRNA ligase"/>
    <property type="match status" value="1"/>
</dbReference>
<dbReference type="Gene3D" id="3.30.1360.70">
    <property type="entry name" value="Arginyl tRNA synthetase N-terminal domain"/>
    <property type="match status" value="1"/>
</dbReference>
<dbReference type="Gene3D" id="3.40.50.620">
    <property type="entry name" value="HUPs"/>
    <property type="match status" value="1"/>
</dbReference>
<dbReference type="Gene3D" id="1.10.730.10">
    <property type="entry name" value="Isoleucyl-tRNA Synthetase, Domain 1"/>
    <property type="match status" value="1"/>
</dbReference>
<dbReference type="HAMAP" id="MF_00123">
    <property type="entry name" value="Arg_tRNA_synth"/>
    <property type="match status" value="1"/>
</dbReference>
<dbReference type="InterPro" id="IPR001412">
    <property type="entry name" value="aa-tRNA-synth_I_CS"/>
</dbReference>
<dbReference type="InterPro" id="IPR001278">
    <property type="entry name" value="Arg-tRNA-ligase"/>
</dbReference>
<dbReference type="InterPro" id="IPR005148">
    <property type="entry name" value="Arg-tRNA-synth_N"/>
</dbReference>
<dbReference type="InterPro" id="IPR036695">
    <property type="entry name" value="Arg-tRNA-synth_N_sf"/>
</dbReference>
<dbReference type="InterPro" id="IPR035684">
    <property type="entry name" value="ArgRS_core"/>
</dbReference>
<dbReference type="InterPro" id="IPR008909">
    <property type="entry name" value="DALR_anticod-bd"/>
</dbReference>
<dbReference type="InterPro" id="IPR014729">
    <property type="entry name" value="Rossmann-like_a/b/a_fold"/>
</dbReference>
<dbReference type="InterPro" id="IPR009080">
    <property type="entry name" value="tRNAsynth_Ia_anticodon-bd"/>
</dbReference>
<dbReference type="NCBIfam" id="TIGR00456">
    <property type="entry name" value="argS"/>
    <property type="match status" value="1"/>
</dbReference>
<dbReference type="PANTHER" id="PTHR11956:SF5">
    <property type="entry name" value="ARGININE--TRNA LIGASE, CYTOPLASMIC"/>
    <property type="match status" value="1"/>
</dbReference>
<dbReference type="PANTHER" id="PTHR11956">
    <property type="entry name" value="ARGINYL-TRNA SYNTHETASE"/>
    <property type="match status" value="1"/>
</dbReference>
<dbReference type="Pfam" id="PF03485">
    <property type="entry name" value="Arg_tRNA_synt_N"/>
    <property type="match status" value="1"/>
</dbReference>
<dbReference type="Pfam" id="PF05746">
    <property type="entry name" value="DALR_1"/>
    <property type="match status" value="1"/>
</dbReference>
<dbReference type="Pfam" id="PF00750">
    <property type="entry name" value="tRNA-synt_1d"/>
    <property type="match status" value="2"/>
</dbReference>
<dbReference type="PRINTS" id="PR01038">
    <property type="entry name" value="TRNASYNTHARG"/>
</dbReference>
<dbReference type="SMART" id="SM01016">
    <property type="entry name" value="Arg_tRNA_synt_N"/>
    <property type="match status" value="1"/>
</dbReference>
<dbReference type="SMART" id="SM00836">
    <property type="entry name" value="DALR_1"/>
    <property type="match status" value="1"/>
</dbReference>
<dbReference type="SUPFAM" id="SSF47323">
    <property type="entry name" value="Anticodon-binding domain of a subclass of class I aminoacyl-tRNA synthetases"/>
    <property type="match status" value="1"/>
</dbReference>
<dbReference type="SUPFAM" id="SSF55190">
    <property type="entry name" value="Arginyl-tRNA synthetase (ArgRS), N-terminal 'additional' domain"/>
    <property type="match status" value="1"/>
</dbReference>
<dbReference type="SUPFAM" id="SSF52374">
    <property type="entry name" value="Nucleotidylyl transferase"/>
    <property type="match status" value="1"/>
</dbReference>
<dbReference type="PROSITE" id="PS00178">
    <property type="entry name" value="AA_TRNA_LIGASE_I"/>
    <property type="match status" value="1"/>
</dbReference>
<name>SYR_PAEAT</name>
<organism>
    <name type="scientific">Paenarthrobacter aurescens (strain TC1)</name>
    <dbReference type="NCBI Taxonomy" id="290340"/>
    <lineage>
        <taxon>Bacteria</taxon>
        <taxon>Bacillati</taxon>
        <taxon>Actinomycetota</taxon>
        <taxon>Actinomycetes</taxon>
        <taxon>Micrococcales</taxon>
        <taxon>Micrococcaceae</taxon>
        <taxon>Paenarthrobacter</taxon>
    </lineage>
</organism>
<proteinExistence type="inferred from homology"/>
<accession>A1R7X2</accession>